<evidence type="ECO:0000255" key="1">
    <source>
        <dbReference type="HAMAP-Rule" id="MF_01031"/>
    </source>
</evidence>
<gene>
    <name evidence="1" type="primary">leuD</name>
    <name type="ordered locus">ECUMN_0073</name>
</gene>
<sequence length="201" mass="22604">MAEKFIKHTGLVVPLDAANVDTDAIIPKQFLQKVTRTGFGAHLFNDWRFLDEKGQQPNPDFVLNFPQYQGASILLARENFGCGSSREHAPWALTDYGFKVVIAPSFADIFYGNSFNNQLLPVKLSDAEVDELFALVKANPGIHFDVDLEAQEVKAGEKTYRFTIDAFRRHCMMNGLDSIGLTLQHDDAIASYEEKQPAFMR</sequence>
<name>LEUD_ECOLU</name>
<reference key="1">
    <citation type="journal article" date="2009" name="PLoS Genet.">
        <title>Organised genome dynamics in the Escherichia coli species results in highly diverse adaptive paths.</title>
        <authorList>
            <person name="Touchon M."/>
            <person name="Hoede C."/>
            <person name="Tenaillon O."/>
            <person name="Barbe V."/>
            <person name="Baeriswyl S."/>
            <person name="Bidet P."/>
            <person name="Bingen E."/>
            <person name="Bonacorsi S."/>
            <person name="Bouchier C."/>
            <person name="Bouvet O."/>
            <person name="Calteau A."/>
            <person name="Chiapello H."/>
            <person name="Clermont O."/>
            <person name="Cruveiller S."/>
            <person name="Danchin A."/>
            <person name="Diard M."/>
            <person name="Dossat C."/>
            <person name="Karoui M.E."/>
            <person name="Frapy E."/>
            <person name="Garry L."/>
            <person name="Ghigo J.M."/>
            <person name="Gilles A.M."/>
            <person name="Johnson J."/>
            <person name="Le Bouguenec C."/>
            <person name="Lescat M."/>
            <person name="Mangenot S."/>
            <person name="Martinez-Jehanne V."/>
            <person name="Matic I."/>
            <person name="Nassif X."/>
            <person name="Oztas S."/>
            <person name="Petit M.A."/>
            <person name="Pichon C."/>
            <person name="Rouy Z."/>
            <person name="Ruf C.S."/>
            <person name="Schneider D."/>
            <person name="Tourret J."/>
            <person name="Vacherie B."/>
            <person name="Vallenet D."/>
            <person name="Medigue C."/>
            <person name="Rocha E.P.C."/>
            <person name="Denamur E."/>
        </authorList>
    </citation>
    <scope>NUCLEOTIDE SEQUENCE [LARGE SCALE GENOMIC DNA]</scope>
    <source>
        <strain>UMN026 / ExPEC</strain>
    </source>
</reference>
<dbReference type="EC" id="4.2.1.33" evidence="1"/>
<dbReference type="EMBL" id="CU928163">
    <property type="protein sequence ID" value="CAR11296.1"/>
    <property type="molecule type" value="Genomic_DNA"/>
</dbReference>
<dbReference type="RefSeq" id="WP_000818231.1">
    <property type="nucleotide sequence ID" value="NC_011751.1"/>
</dbReference>
<dbReference type="RefSeq" id="YP_002410851.1">
    <property type="nucleotide sequence ID" value="NC_011751.1"/>
</dbReference>
<dbReference type="SMR" id="B7N7U6"/>
<dbReference type="STRING" id="585056.ECUMN_0073"/>
<dbReference type="KEGG" id="eum:ECUMN_0073"/>
<dbReference type="PATRIC" id="fig|585056.7.peg.261"/>
<dbReference type="HOGENOM" id="CLU_081378_0_3_6"/>
<dbReference type="UniPathway" id="UPA00048">
    <property type="reaction ID" value="UER00071"/>
</dbReference>
<dbReference type="Proteomes" id="UP000007097">
    <property type="component" value="Chromosome"/>
</dbReference>
<dbReference type="GO" id="GO:0009316">
    <property type="term" value="C:3-isopropylmalate dehydratase complex"/>
    <property type="evidence" value="ECO:0007669"/>
    <property type="project" value="InterPro"/>
</dbReference>
<dbReference type="GO" id="GO:0003861">
    <property type="term" value="F:3-isopropylmalate dehydratase activity"/>
    <property type="evidence" value="ECO:0007669"/>
    <property type="project" value="UniProtKB-UniRule"/>
</dbReference>
<dbReference type="GO" id="GO:0009098">
    <property type="term" value="P:L-leucine biosynthetic process"/>
    <property type="evidence" value="ECO:0007669"/>
    <property type="project" value="UniProtKB-UniRule"/>
</dbReference>
<dbReference type="CDD" id="cd01577">
    <property type="entry name" value="IPMI_Swivel"/>
    <property type="match status" value="1"/>
</dbReference>
<dbReference type="FunFam" id="3.20.19.10:FF:000003">
    <property type="entry name" value="3-isopropylmalate dehydratase small subunit"/>
    <property type="match status" value="1"/>
</dbReference>
<dbReference type="Gene3D" id="3.20.19.10">
    <property type="entry name" value="Aconitase, domain 4"/>
    <property type="match status" value="1"/>
</dbReference>
<dbReference type="HAMAP" id="MF_01031">
    <property type="entry name" value="LeuD_type1"/>
    <property type="match status" value="1"/>
</dbReference>
<dbReference type="InterPro" id="IPR004431">
    <property type="entry name" value="3-IsopropMal_deHydase_ssu"/>
</dbReference>
<dbReference type="InterPro" id="IPR015928">
    <property type="entry name" value="Aconitase/3IPM_dehydase_swvl"/>
</dbReference>
<dbReference type="InterPro" id="IPR000573">
    <property type="entry name" value="AconitaseA/IPMdHydase_ssu_swvl"/>
</dbReference>
<dbReference type="InterPro" id="IPR033940">
    <property type="entry name" value="IPMI_Swivel"/>
</dbReference>
<dbReference type="InterPro" id="IPR050075">
    <property type="entry name" value="LeuD"/>
</dbReference>
<dbReference type="NCBIfam" id="TIGR00171">
    <property type="entry name" value="leuD"/>
    <property type="match status" value="1"/>
</dbReference>
<dbReference type="NCBIfam" id="NF002458">
    <property type="entry name" value="PRK01641.1"/>
    <property type="match status" value="1"/>
</dbReference>
<dbReference type="PANTHER" id="PTHR43345:SF5">
    <property type="entry name" value="3-ISOPROPYLMALATE DEHYDRATASE SMALL SUBUNIT"/>
    <property type="match status" value="1"/>
</dbReference>
<dbReference type="PANTHER" id="PTHR43345">
    <property type="entry name" value="3-ISOPROPYLMALATE DEHYDRATASE SMALL SUBUNIT 2-RELATED-RELATED"/>
    <property type="match status" value="1"/>
</dbReference>
<dbReference type="Pfam" id="PF00694">
    <property type="entry name" value="Aconitase_C"/>
    <property type="match status" value="1"/>
</dbReference>
<dbReference type="SUPFAM" id="SSF52016">
    <property type="entry name" value="LeuD/IlvD-like"/>
    <property type="match status" value="1"/>
</dbReference>
<keyword id="KW-0028">Amino-acid biosynthesis</keyword>
<keyword id="KW-0100">Branched-chain amino acid biosynthesis</keyword>
<keyword id="KW-0432">Leucine biosynthesis</keyword>
<keyword id="KW-0456">Lyase</keyword>
<proteinExistence type="inferred from homology"/>
<organism>
    <name type="scientific">Escherichia coli O17:K52:H18 (strain UMN026 / ExPEC)</name>
    <dbReference type="NCBI Taxonomy" id="585056"/>
    <lineage>
        <taxon>Bacteria</taxon>
        <taxon>Pseudomonadati</taxon>
        <taxon>Pseudomonadota</taxon>
        <taxon>Gammaproteobacteria</taxon>
        <taxon>Enterobacterales</taxon>
        <taxon>Enterobacteriaceae</taxon>
        <taxon>Escherichia</taxon>
    </lineage>
</organism>
<feature type="chain" id="PRO_1000135804" description="3-isopropylmalate dehydratase small subunit">
    <location>
        <begin position="1"/>
        <end position="201"/>
    </location>
</feature>
<protein>
    <recommendedName>
        <fullName evidence="1">3-isopropylmalate dehydratase small subunit</fullName>
        <ecNumber evidence="1">4.2.1.33</ecNumber>
    </recommendedName>
    <alternativeName>
        <fullName evidence="1">Alpha-IPM isomerase</fullName>
        <shortName evidence="1">IPMI</shortName>
    </alternativeName>
    <alternativeName>
        <fullName evidence="1">Isopropylmalate isomerase</fullName>
    </alternativeName>
</protein>
<accession>B7N7U6</accession>
<comment type="function">
    <text evidence="1">Catalyzes the isomerization between 2-isopropylmalate and 3-isopropylmalate, via the formation of 2-isopropylmaleate.</text>
</comment>
<comment type="catalytic activity">
    <reaction evidence="1">
        <text>(2R,3S)-3-isopropylmalate = (2S)-2-isopropylmalate</text>
        <dbReference type="Rhea" id="RHEA:32287"/>
        <dbReference type="ChEBI" id="CHEBI:1178"/>
        <dbReference type="ChEBI" id="CHEBI:35121"/>
        <dbReference type="EC" id="4.2.1.33"/>
    </reaction>
</comment>
<comment type="pathway">
    <text evidence="1">Amino-acid biosynthesis; L-leucine biosynthesis; L-leucine from 3-methyl-2-oxobutanoate: step 2/4.</text>
</comment>
<comment type="subunit">
    <text evidence="1">Heterodimer of LeuC and LeuD.</text>
</comment>
<comment type="similarity">
    <text evidence="1">Belongs to the LeuD family. LeuD type 1 subfamily.</text>
</comment>